<name>FLUC_METRJ</name>
<proteinExistence type="inferred from homology"/>
<comment type="function">
    <text evidence="1">Fluoride-specific ion channel. Important for reducing fluoride concentration in the cell, thus reducing its toxicity.</text>
</comment>
<comment type="catalytic activity">
    <reaction evidence="1">
        <text>fluoride(in) = fluoride(out)</text>
        <dbReference type="Rhea" id="RHEA:76159"/>
        <dbReference type="ChEBI" id="CHEBI:17051"/>
    </reaction>
    <physiologicalReaction direction="left-to-right" evidence="1">
        <dbReference type="Rhea" id="RHEA:76160"/>
    </physiologicalReaction>
</comment>
<comment type="activity regulation">
    <text evidence="1">Na(+) is not transported, but it plays an essential structural role and its presence is essential for fluoride channel function.</text>
</comment>
<comment type="subcellular location">
    <subcellularLocation>
        <location evidence="1">Cell inner membrane</location>
        <topology evidence="1">Multi-pass membrane protein</topology>
    </subcellularLocation>
</comment>
<comment type="similarity">
    <text evidence="1">Belongs to the fluoride channel Fluc/FEX (TC 1.A.43) family.</text>
</comment>
<dbReference type="EMBL" id="CP001001">
    <property type="protein sequence ID" value="ACB26445.1"/>
    <property type="molecule type" value="Genomic_DNA"/>
</dbReference>
<dbReference type="RefSeq" id="WP_012321398.1">
    <property type="nucleotide sequence ID" value="NC_010505.1"/>
</dbReference>
<dbReference type="SMR" id="B1M4Y4"/>
<dbReference type="STRING" id="426355.Mrad2831_4479"/>
<dbReference type="GeneID" id="6140545"/>
<dbReference type="KEGG" id="mrd:Mrad2831_4479"/>
<dbReference type="eggNOG" id="COG0239">
    <property type="taxonomic scope" value="Bacteria"/>
</dbReference>
<dbReference type="HOGENOM" id="CLU_114342_3_0_5"/>
<dbReference type="OrthoDB" id="9806299at2"/>
<dbReference type="Proteomes" id="UP000006589">
    <property type="component" value="Chromosome"/>
</dbReference>
<dbReference type="GO" id="GO:0005886">
    <property type="term" value="C:plasma membrane"/>
    <property type="evidence" value="ECO:0007669"/>
    <property type="project" value="UniProtKB-SubCell"/>
</dbReference>
<dbReference type="GO" id="GO:0062054">
    <property type="term" value="F:fluoride channel activity"/>
    <property type="evidence" value="ECO:0007669"/>
    <property type="project" value="UniProtKB-UniRule"/>
</dbReference>
<dbReference type="GO" id="GO:0046872">
    <property type="term" value="F:metal ion binding"/>
    <property type="evidence" value="ECO:0007669"/>
    <property type="project" value="UniProtKB-KW"/>
</dbReference>
<dbReference type="GO" id="GO:0140114">
    <property type="term" value="P:cellular detoxification of fluoride"/>
    <property type="evidence" value="ECO:0007669"/>
    <property type="project" value="UniProtKB-UniRule"/>
</dbReference>
<dbReference type="HAMAP" id="MF_00454">
    <property type="entry name" value="FluC"/>
    <property type="match status" value="1"/>
</dbReference>
<dbReference type="InterPro" id="IPR003691">
    <property type="entry name" value="FluC"/>
</dbReference>
<dbReference type="NCBIfam" id="TIGR00494">
    <property type="entry name" value="crcB"/>
    <property type="match status" value="1"/>
</dbReference>
<dbReference type="NCBIfam" id="NF010802">
    <property type="entry name" value="PRK14206.1"/>
    <property type="match status" value="1"/>
</dbReference>
<dbReference type="PANTHER" id="PTHR28259">
    <property type="entry name" value="FLUORIDE EXPORT PROTEIN 1-RELATED"/>
    <property type="match status" value="1"/>
</dbReference>
<dbReference type="PANTHER" id="PTHR28259:SF1">
    <property type="entry name" value="FLUORIDE EXPORT PROTEIN 1-RELATED"/>
    <property type="match status" value="1"/>
</dbReference>
<dbReference type="Pfam" id="PF02537">
    <property type="entry name" value="CRCB"/>
    <property type="match status" value="1"/>
</dbReference>
<evidence type="ECO:0000255" key="1">
    <source>
        <dbReference type="HAMAP-Rule" id="MF_00454"/>
    </source>
</evidence>
<organism>
    <name type="scientific">Methylobacterium radiotolerans (strain ATCC 27329 / DSM 1819 / JCM 2831 / NBRC 15690 / NCIMB 10815 / 0-1)</name>
    <dbReference type="NCBI Taxonomy" id="426355"/>
    <lineage>
        <taxon>Bacteria</taxon>
        <taxon>Pseudomonadati</taxon>
        <taxon>Pseudomonadota</taxon>
        <taxon>Alphaproteobacteria</taxon>
        <taxon>Hyphomicrobiales</taxon>
        <taxon>Methylobacteriaceae</taxon>
        <taxon>Methylobacterium</taxon>
    </lineage>
</organism>
<protein>
    <recommendedName>
        <fullName evidence="1">Fluoride-specific ion channel FluC</fullName>
    </recommendedName>
</protein>
<feature type="chain" id="PRO_1000125139" description="Fluoride-specific ion channel FluC">
    <location>
        <begin position="1"/>
        <end position="143"/>
    </location>
</feature>
<feature type="transmembrane region" description="Helical" evidence="1">
    <location>
        <begin position="6"/>
        <end position="26"/>
    </location>
</feature>
<feature type="transmembrane region" description="Helical" evidence="1">
    <location>
        <begin position="38"/>
        <end position="58"/>
    </location>
</feature>
<feature type="transmembrane region" description="Helical" evidence="1">
    <location>
        <begin position="70"/>
        <end position="90"/>
    </location>
</feature>
<feature type="transmembrane region" description="Helical" evidence="1">
    <location>
        <begin position="103"/>
        <end position="123"/>
    </location>
</feature>
<feature type="binding site" evidence="1">
    <location>
        <position position="78"/>
    </location>
    <ligand>
        <name>Na(+)</name>
        <dbReference type="ChEBI" id="CHEBI:29101"/>
        <note>structural</note>
    </ligand>
</feature>
<feature type="binding site" evidence="1">
    <location>
        <position position="81"/>
    </location>
    <ligand>
        <name>Na(+)</name>
        <dbReference type="ChEBI" id="CHEBI:29101"/>
        <note>structural</note>
    </ligand>
</feature>
<gene>
    <name evidence="1" type="primary">fluC</name>
    <name evidence="1" type="synonym">crcB</name>
    <name type="ordered locus">Mrad2831_4479</name>
</gene>
<keyword id="KW-0997">Cell inner membrane</keyword>
<keyword id="KW-1003">Cell membrane</keyword>
<keyword id="KW-0407">Ion channel</keyword>
<keyword id="KW-0406">Ion transport</keyword>
<keyword id="KW-0472">Membrane</keyword>
<keyword id="KW-0479">Metal-binding</keyword>
<keyword id="KW-0915">Sodium</keyword>
<keyword id="KW-0812">Transmembrane</keyword>
<keyword id="KW-1133">Transmembrane helix</keyword>
<keyword id="KW-0813">Transport</keyword>
<reference key="1">
    <citation type="submission" date="2008-03" db="EMBL/GenBank/DDBJ databases">
        <title>Complete sequence of chromosome of Methylobacterium radiotolerans JCM 2831.</title>
        <authorList>
            <consortium name="US DOE Joint Genome Institute"/>
            <person name="Copeland A."/>
            <person name="Lucas S."/>
            <person name="Lapidus A."/>
            <person name="Glavina del Rio T."/>
            <person name="Dalin E."/>
            <person name="Tice H."/>
            <person name="Bruce D."/>
            <person name="Goodwin L."/>
            <person name="Pitluck S."/>
            <person name="Kiss H."/>
            <person name="Brettin T."/>
            <person name="Detter J.C."/>
            <person name="Han C."/>
            <person name="Kuske C.R."/>
            <person name="Schmutz J."/>
            <person name="Larimer F."/>
            <person name="Land M."/>
            <person name="Hauser L."/>
            <person name="Kyrpides N."/>
            <person name="Mikhailova N."/>
            <person name="Marx C.J."/>
            <person name="Richardson P."/>
        </authorList>
    </citation>
    <scope>NUCLEOTIDE SEQUENCE [LARGE SCALE GENOMIC DNA]</scope>
    <source>
        <strain>ATCC 27329 / DSM 1819 / JCM 2831 / NBRC 15690 / NCIMB 10815 / 0-1</strain>
    </source>
</reference>
<sequence length="143" mass="15020">MSFTTCILVMIGGALGTLARYVVSVLSLPISRDLPWGTILINVTGSFIIGLFGTLTLAQGRFPVSENVRLFVMIGLCGGYTTFSSFSLQTLDLMRNGAVVRAMVNVCASVVLCVLAVALGHVVAAHWNGGAVQIAQVSIEEDG</sequence>
<accession>B1M4Y4</accession>